<protein>
    <recommendedName>
        <fullName evidence="7">Protein EMSY-LIKE 3</fullName>
        <shortName evidence="7">AtEML3</shortName>
    </recommendedName>
</protein>
<organism evidence="12">
    <name type="scientific">Arabidopsis thaliana</name>
    <name type="common">Mouse-ear cress</name>
    <dbReference type="NCBI Taxonomy" id="3702"/>
    <lineage>
        <taxon>Eukaryota</taxon>
        <taxon>Viridiplantae</taxon>
        <taxon>Streptophyta</taxon>
        <taxon>Embryophyta</taxon>
        <taxon>Tracheophyta</taxon>
        <taxon>Spermatophyta</taxon>
        <taxon>Magnoliopsida</taxon>
        <taxon>eudicotyledons</taxon>
        <taxon>Gunneridae</taxon>
        <taxon>Pentapetalae</taxon>
        <taxon>rosids</taxon>
        <taxon>malvids</taxon>
        <taxon>Brassicales</taxon>
        <taxon>Brassicaceae</taxon>
        <taxon>Camelineae</taxon>
        <taxon>Arabidopsis</taxon>
    </lineage>
</organism>
<reference key="1">
    <citation type="journal article" date="2000" name="Nature">
        <title>Sequence and analysis of chromosome 5 of the plant Arabidopsis thaliana.</title>
        <authorList>
            <person name="Tabata S."/>
            <person name="Kaneko T."/>
            <person name="Nakamura Y."/>
            <person name="Kotani H."/>
            <person name="Kato T."/>
            <person name="Asamizu E."/>
            <person name="Miyajima N."/>
            <person name="Sasamoto S."/>
            <person name="Kimura T."/>
            <person name="Hosouchi T."/>
            <person name="Kawashima K."/>
            <person name="Kohara M."/>
            <person name="Matsumoto M."/>
            <person name="Matsuno A."/>
            <person name="Muraki A."/>
            <person name="Nakayama S."/>
            <person name="Nakazaki N."/>
            <person name="Naruo K."/>
            <person name="Okumura S."/>
            <person name="Shinpo S."/>
            <person name="Takeuchi C."/>
            <person name="Wada T."/>
            <person name="Watanabe A."/>
            <person name="Yamada M."/>
            <person name="Yasuda M."/>
            <person name="Sato S."/>
            <person name="de la Bastide M."/>
            <person name="Huang E."/>
            <person name="Spiegel L."/>
            <person name="Gnoj L."/>
            <person name="O'Shaughnessy A."/>
            <person name="Preston R."/>
            <person name="Habermann K."/>
            <person name="Murray J."/>
            <person name="Johnson D."/>
            <person name="Rohlfing T."/>
            <person name="Nelson J."/>
            <person name="Stoneking T."/>
            <person name="Pepin K."/>
            <person name="Spieth J."/>
            <person name="Sekhon M."/>
            <person name="Armstrong J."/>
            <person name="Becker M."/>
            <person name="Belter E."/>
            <person name="Cordum H."/>
            <person name="Cordes M."/>
            <person name="Courtney L."/>
            <person name="Courtney W."/>
            <person name="Dante M."/>
            <person name="Du H."/>
            <person name="Edwards J."/>
            <person name="Fryman J."/>
            <person name="Haakensen B."/>
            <person name="Lamar E."/>
            <person name="Latreille P."/>
            <person name="Leonard S."/>
            <person name="Meyer R."/>
            <person name="Mulvaney E."/>
            <person name="Ozersky P."/>
            <person name="Riley A."/>
            <person name="Strowmatt C."/>
            <person name="Wagner-McPherson C."/>
            <person name="Wollam A."/>
            <person name="Yoakum M."/>
            <person name="Bell M."/>
            <person name="Dedhia N."/>
            <person name="Parnell L."/>
            <person name="Shah R."/>
            <person name="Rodriguez M."/>
            <person name="Hoon See L."/>
            <person name="Vil D."/>
            <person name="Baker J."/>
            <person name="Kirchoff K."/>
            <person name="Toth K."/>
            <person name="King L."/>
            <person name="Bahret A."/>
            <person name="Miller B."/>
            <person name="Marra M.A."/>
            <person name="Martienssen R."/>
            <person name="McCombie W.R."/>
            <person name="Wilson R.K."/>
            <person name="Murphy G."/>
            <person name="Bancroft I."/>
            <person name="Volckaert G."/>
            <person name="Wambutt R."/>
            <person name="Duesterhoeft A."/>
            <person name="Stiekema W."/>
            <person name="Pohl T."/>
            <person name="Entian K.-D."/>
            <person name="Terryn N."/>
            <person name="Hartley N."/>
            <person name="Bent E."/>
            <person name="Johnson S."/>
            <person name="Langham S.-A."/>
            <person name="McCullagh B."/>
            <person name="Robben J."/>
            <person name="Grymonprez B."/>
            <person name="Zimmermann W."/>
            <person name="Ramsperger U."/>
            <person name="Wedler H."/>
            <person name="Balke K."/>
            <person name="Wedler E."/>
            <person name="Peters S."/>
            <person name="van Staveren M."/>
            <person name="Dirkse W."/>
            <person name="Mooijman P."/>
            <person name="Klein Lankhorst R."/>
            <person name="Weitzenegger T."/>
            <person name="Bothe G."/>
            <person name="Rose M."/>
            <person name="Hauf J."/>
            <person name="Berneiser S."/>
            <person name="Hempel S."/>
            <person name="Feldpausch M."/>
            <person name="Lamberth S."/>
            <person name="Villarroel R."/>
            <person name="Gielen J."/>
            <person name="Ardiles W."/>
            <person name="Bents O."/>
            <person name="Lemcke K."/>
            <person name="Kolesov G."/>
            <person name="Mayer K.F.X."/>
            <person name="Rudd S."/>
            <person name="Schoof H."/>
            <person name="Schueller C."/>
            <person name="Zaccaria P."/>
            <person name="Mewes H.-W."/>
            <person name="Bevan M."/>
            <person name="Fransz P.F."/>
        </authorList>
    </citation>
    <scope>NUCLEOTIDE SEQUENCE [LARGE SCALE GENOMIC DNA]</scope>
    <source>
        <strain>cv. Columbia</strain>
    </source>
</reference>
<reference key="2">
    <citation type="journal article" date="2017" name="Plant J.">
        <title>Araport11: a complete reannotation of the Arabidopsis thaliana reference genome.</title>
        <authorList>
            <person name="Cheng C.Y."/>
            <person name="Krishnakumar V."/>
            <person name="Chan A.P."/>
            <person name="Thibaud-Nissen F."/>
            <person name="Schobel S."/>
            <person name="Town C.D."/>
        </authorList>
    </citation>
    <scope>GENOME REANNOTATION</scope>
    <source>
        <strain>cv. Columbia</strain>
    </source>
</reference>
<reference key="3">
    <citation type="journal article" date="2009" name="J. Proteomics">
        <title>Phosphoproteomic analysis of nuclei-enriched fractions from Arabidopsis thaliana.</title>
        <authorList>
            <person name="Jones A.M.E."/>
            <person name="MacLean D."/>
            <person name="Studholme D.J."/>
            <person name="Serna-Sanz A."/>
            <person name="Andreasson E."/>
            <person name="Rathjen J.P."/>
            <person name="Peck S.C."/>
        </authorList>
    </citation>
    <scope>PHOSPHORYLATION [LARGE SCALE ANALYSIS] AT SER-390</scope>
    <scope>IDENTIFICATION BY MASS SPECTROMETRY [LARGE SCALE ANALYSIS]</scope>
    <source>
        <strain>cv. Columbia</strain>
    </source>
</reference>
<reference key="4">
    <citation type="journal article" date="2009" name="Plant Physiol.">
        <title>Large-scale Arabidopsis phosphoproteome profiling reveals novel chloroplast kinase substrates and phosphorylation networks.</title>
        <authorList>
            <person name="Reiland S."/>
            <person name="Messerli G."/>
            <person name="Baerenfaller K."/>
            <person name="Gerrits B."/>
            <person name="Endler A."/>
            <person name="Grossmann J."/>
            <person name="Gruissem W."/>
            <person name="Baginsky S."/>
        </authorList>
    </citation>
    <scope>IDENTIFICATION BY MASS SPECTROMETRY [LARGE SCALE ANALYSIS]</scope>
</reference>
<reference key="5">
    <citation type="journal article" date="2011" name="Mol. Plant Microbe Interact.">
        <title>EMSY-like genes are required for full RPP7-mediated race-specific immunity and basal defense in Arabidopsis.</title>
        <authorList>
            <person name="Tsuchiya T."/>
            <person name="Eulgem T."/>
        </authorList>
    </citation>
    <scope>FUNCTION</scope>
    <scope>GENE FAMILY</scope>
    <scope>NOMENCLATURE</scope>
</reference>
<comment type="function">
    <text evidence="6 9">Probably involved in the regulation of chromatin states (Probable). Contributes to basal immunity (PubMed:21830950).</text>
</comment>
<comment type="subcellular location">
    <subcellularLocation>
        <location evidence="1 4">Nucleus</location>
    </subcellularLocation>
</comment>
<comment type="sequence caution" evidence="8">
    <conflict type="erroneous gene model prediction">
        <sequence resource="EMBL-CDS" id="CAB88266"/>
    </conflict>
</comment>
<proteinExistence type="evidence at protein level"/>
<accession>F4K2F0</accession>
<accession>Q9LXT7</accession>
<feature type="chain" id="PRO_0000431793" description="Protein EMSY-LIKE 3">
    <location>
        <begin position="1"/>
        <end position="397"/>
    </location>
</feature>
<feature type="domain" description="ENT" evidence="3">
    <location>
        <begin position="50"/>
        <end position="137"/>
    </location>
</feature>
<feature type="region of interest" description="Disordered" evidence="5">
    <location>
        <begin position="1"/>
        <end position="40"/>
    </location>
</feature>
<feature type="region of interest" description="Disordered" evidence="5">
    <location>
        <begin position="122"/>
        <end position="221"/>
    </location>
</feature>
<feature type="region of interest" description="Disordered" evidence="5">
    <location>
        <begin position="284"/>
        <end position="330"/>
    </location>
</feature>
<feature type="coiled-coil region" evidence="2">
    <location>
        <begin position="81"/>
        <end position="107"/>
    </location>
</feature>
<feature type="coiled-coil region" evidence="2">
    <location>
        <begin position="363"/>
        <end position="389"/>
    </location>
</feature>
<feature type="short sequence motif" description="Nuclear localization signal" evidence="4">
    <location>
        <begin position="175"/>
        <end position="182"/>
    </location>
</feature>
<feature type="compositionally biased region" description="Polar residues" evidence="5">
    <location>
        <begin position="164"/>
        <end position="174"/>
    </location>
</feature>
<feature type="modified residue" description="Phosphoserine" evidence="13">
    <location>
        <position position="390"/>
    </location>
</feature>
<sequence length="397" mass="43653">MDYRPSDSSGTDDDLPPSHQGRYQRNARPTGNGRPSVLNSAPLSRVHNEMETQIHLIEQEAYSSILRAFKAQSDAITWEKESLITELRKELRVSDEEHRELLSRVNADEMIRRIREWRKANSLQSSVPQLVHDAPSPAVSGSRKKQKTSQSIASLAMGPPSPSLHPSMQPSSSALRRGGPPPGPKTKKPKTSMQYPSTGIAGRPQAGALTNEPGESGSYDPLVGRKVWTKWPDDNQYYEAVITDYNPVEGRHALVYDINSANETWEWVNLKEISPGDIRWEGEDPGISRKGGHPGQGRGTKTMARGGPASNAGGRGRGSMRMQQPKTQNGIGKKALGEIEILHTETLLKEVEKVFGSVNPNPAEVEKAKRVLRDHELALMDAIAKLEEISDGESGNI</sequence>
<name>EML3_ARATH</name>
<evidence type="ECO:0000250" key="1">
    <source>
        <dbReference type="UniProtKB" id="Q9C7C4"/>
    </source>
</evidence>
<evidence type="ECO:0000255" key="2"/>
<evidence type="ECO:0000255" key="3">
    <source>
        <dbReference type="PROSITE-ProRule" id="PRU00476"/>
    </source>
</evidence>
<evidence type="ECO:0000255" key="4">
    <source>
        <dbReference type="PROSITE-ProRule" id="PRU00768"/>
    </source>
</evidence>
<evidence type="ECO:0000256" key="5">
    <source>
        <dbReference type="SAM" id="MobiDB-lite"/>
    </source>
</evidence>
<evidence type="ECO:0000269" key="6">
    <source>
    </source>
</evidence>
<evidence type="ECO:0000303" key="7">
    <source>
    </source>
</evidence>
<evidence type="ECO:0000305" key="8"/>
<evidence type="ECO:0000305" key="9">
    <source>
    </source>
</evidence>
<evidence type="ECO:0000312" key="10">
    <source>
        <dbReference type="Araport" id="AT5G13020"/>
    </source>
</evidence>
<evidence type="ECO:0000312" key="11">
    <source>
        <dbReference type="EMBL" id="CAB88266.1"/>
    </source>
</evidence>
<evidence type="ECO:0000312" key="12">
    <source>
        <dbReference type="Proteomes" id="UP000006548"/>
    </source>
</evidence>
<evidence type="ECO:0007744" key="13">
    <source>
    </source>
</evidence>
<keyword id="KW-0175">Coiled coil</keyword>
<keyword id="KW-0539">Nucleus</keyword>
<keyword id="KW-0597">Phosphoprotein</keyword>
<keyword id="KW-0611">Plant defense</keyword>
<keyword id="KW-1185">Reference proteome</keyword>
<gene>
    <name evidence="7" type="primary">EML3</name>
    <name evidence="10" type="ordered locus">At5g13020</name>
    <name evidence="11" type="ORF">T24H18.190</name>
</gene>
<dbReference type="EMBL" id="AL353013">
    <property type="protein sequence ID" value="CAB88266.1"/>
    <property type="status" value="ALT_SEQ"/>
    <property type="molecule type" value="Genomic_DNA"/>
</dbReference>
<dbReference type="EMBL" id="CP002688">
    <property type="protein sequence ID" value="AED91842.1"/>
    <property type="molecule type" value="Genomic_DNA"/>
</dbReference>
<dbReference type="PIR" id="T49916">
    <property type="entry name" value="T49916"/>
</dbReference>
<dbReference type="RefSeq" id="NP_196806.2">
    <property type="nucleotide sequence ID" value="NM_121305.4"/>
</dbReference>
<dbReference type="SMR" id="F4K2F0"/>
<dbReference type="FunCoup" id="F4K2F0">
    <property type="interactions" value="2311"/>
</dbReference>
<dbReference type="STRING" id="3702.F4K2F0"/>
<dbReference type="iPTMnet" id="F4K2F0"/>
<dbReference type="PaxDb" id="3702-AT5G13020.1"/>
<dbReference type="ProteomicsDB" id="222660"/>
<dbReference type="EnsemblPlants" id="AT5G13020.1">
    <property type="protein sequence ID" value="AT5G13020.1"/>
    <property type="gene ID" value="AT5G13020"/>
</dbReference>
<dbReference type="GeneID" id="831142"/>
<dbReference type="Gramene" id="AT5G13020.1">
    <property type="protein sequence ID" value="AT5G13020.1"/>
    <property type="gene ID" value="AT5G13020"/>
</dbReference>
<dbReference type="KEGG" id="ath:AT5G13020"/>
<dbReference type="Araport" id="AT5G13020"/>
<dbReference type="TAIR" id="AT5G13020">
    <property type="gene designation" value="EML3"/>
</dbReference>
<dbReference type="eggNOG" id="KOG4675">
    <property type="taxonomic scope" value="Eukaryota"/>
</dbReference>
<dbReference type="HOGENOM" id="CLU_038636_0_1_1"/>
<dbReference type="InParanoid" id="F4K2F0"/>
<dbReference type="OMA" id="WTRWPAD"/>
<dbReference type="OrthoDB" id="1737049at2759"/>
<dbReference type="CD-CODE" id="4299E36E">
    <property type="entry name" value="Nucleolus"/>
</dbReference>
<dbReference type="PRO" id="PR:F4K2F0"/>
<dbReference type="Proteomes" id="UP000006548">
    <property type="component" value="Chromosome 5"/>
</dbReference>
<dbReference type="ExpressionAtlas" id="F4K2F0">
    <property type="expression patterns" value="baseline and differential"/>
</dbReference>
<dbReference type="GO" id="GO:0005634">
    <property type="term" value="C:nucleus"/>
    <property type="evidence" value="ECO:0007669"/>
    <property type="project" value="UniProtKB-SubCell"/>
</dbReference>
<dbReference type="GO" id="GO:0003682">
    <property type="term" value="F:chromatin binding"/>
    <property type="evidence" value="ECO:0000314"/>
    <property type="project" value="TAIR"/>
</dbReference>
<dbReference type="GO" id="GO:0031491">
    <property type="term" value="F:nucleosome binding"/>
    <property type="evidence" value="ECO:0000314"/>
    <property type="project" value="TAIR"/>
</dbReference>
<dbReference type="GO" id="GO:0050832">
    <property type="term" value="P:defense response to fungus"/>
    <property type="evidence" value="ECO:0007669"/>
    <property type="project" value="InterPro"/>
</dbReference>
<dbReference type="GO" id="GO:0006357">
    <property type="term" value="P:regulation of transcription by RNA polymerase II"/>
    <property type="evidence" value="ECO:0000315"/>
    <property type="project" value="TAIR"/>
</dbReference>
<dbReference type="CDD" id="cd20404">
    <property type="entry name" value="Tudor_Agenet_AtEML-like"/>
    <property type="match status" value="1"/>
</dbReference>
<dbReference type="FunFam" id="1.10.1240.40:FF:000005">
    <property type="entry name" value="ENT domain containing protein, expressed"/>
    <property type="match status" value="1"/>
</dbReference>
<dbReference type="FunFam" id="2.30.30.140:FF:000088">
    <property type="entry name" value="Protein EMSY-LIKE 3"/>
    <property type="match status" value="1"/>
</dbReference>
<dbReference type="Gene3D" id="2.30.30.140">
    <property type="match status" value="1"/>
</dbReference>
<dbReference type="Gene3D" id="1.10.1240.40">
    <property type="entry name" value="ENT domain"/>
    <property type="match status" value="1"/>
</dbReference>
<dbReference type="InterPro" id="IPR014002">
    <property type="entry name" value="Agenet_dom_plant"/>
</dbReference>
<dbReference type="InterPro" id="IPR033485">
    <property type="entry name" value="EMSY-LIKE_plant"/>
</dbReference>
<dbReference type="InterPro" id="IPR005491">
    <property type="entry name" value="ENT_dom"/>
</dbReference>
<dbReference type="InterPro" id="IPR036142">
    <property type="entry name" value="ENT_dom-like_sf"/>
</dbReference>
<dbReference type="PANTHER" id="PTHR33432:SF27">
    <property type="entry name" value="PROTEIN EMSY-LIKE 3"/>
    <property type="match status" value="1"/>
</dbReference>
<dbReference type="PANTHER" id="PTHR33432">
    <property type="entry name" value="PROTEIN EMSY-LIKE 4"/>
    <property type="match status" value="1"/>
</dbReference>
<dbReference type="Pfam" id="PF03735">
    <property type="entry name" value="ENT"/>
    <property type="match status" value="1"/>
</dbReference>
<dbReference type="SMART" id="SM00743">
    <property type="entry name" value="Agenet"/>
    <property type="match status" value="1"/>
</dbReference>
<dbReference type="SMART" id="SM01191">
    <property type="entry name" value="ENT"/>
    <property type="match status" value="1"/>
</dbReference>
<dbReference type="SUPFAM" id="SSF158639">
    <property type="entry name" value="ENT-like"/>
    <property type="match status" value="1"/>
</dbReference>
<dbReference type="SUPFAM" id="SSF63748">
    <property type="entry name" value="Tudor/PWWP/MBT"/>
    <property type="match status" value="1"/>
</dbReference>
<dbReference type="PROSITE" id="PS51138">
    <property type="entry name" value="ENT"/>
    <property type="match status" value="1"/>
</dbReference>